<accession>C1FKP7</accession>
<keyword id="KW-0028">Amino-acid biosynthesis</keyword>
<keyword id="KW-0368">Histidine biosynthesis</keyword>
<keyword id="KW-0378">Hydrolase</keyword>
<keyword id="KW-0486">Methionine biosynthesis</keyword>
<keyword id="KW-0511">Multifunctional enzyme</keyword>
<keyword id="KW-0521">NADP</keyword>
<keyword id="KW-0554">One-carbon metabolism</keyword>
<keyword id="KW-0560">Oxidoreductase</keyword>
<keyword id="KW-0658">Purine biosynthesis</keyword>
<proteinExistence type="inferred from homology"/>
<evidence type="ECO:0000255" key="1">
    <source>
        <dbReference type="HAMAP-Rule" id="MF_01576"/>
    </source>
</evidence>
<dbReference type="EC" id="1.5.1.5" evidence="1"/>
<dbReference type="EC" id="3.5.4.9" evidence="1"/>
<dbReference type="EMBL" id="CP001581">
    <property type="protein sequence ID" value="ACO85580.1"/>
    <property type="molecule type" value="Genomic_DNA"/>
</dbReference>
<dbReference type="RefSeq" id="WP_012704834.1">
    <property type="nucleotide sequence ID" value="NC_012563.1"/>
</dbReference>
<dbReference type="SMR" id="C1FKP7"/>
<dbReference type="KEGG" id="cby:CLM_1323"/>
<dbReference type="eggNOG" id="COG0190">
    <property type="taxonomic scope" value="Bacteria"/>
</dbReference>
<dbReference type="HOGENOM" id="CLU_034045_2_1_9"/>
<dbReference type="UniPathway" id="UPA00193"/>
<dbReference type="Proteomes" id="UP000001374">
    <property type="component" value="Chromosome"/>
</dbReference>
<dbReference type="GO" id="GO:0005829">
    <property type="term" value="C:cytosol"/>
    <property type="evidence" value="ECO:0007669"/>
    <property type="project" value="TreeGrafter"/>
</dbReference>
<dbReference type="GO" id="GO:0004477">
    <property type="term" value="F:methenyltetrahydrofolate cyclohydrolase activity"/>
    <property type="evidence" value="ECO:0007669"/>
    <property type="project" value="UniProtKB-UniRule"/>
</dbReference>
<dbReference type="GO" id="GO:0004488">
    <property type="term" value="F:methylenetetrahydrofolate dehydrogenase (NADP+) activity"/>
    <property type="evidence" value="ECO:0007669"/>
    <property type="project" value="UniProtKB-UniRule"/>
</dbReference>
<dbReference type="GO" id="GO:0000105">
    <property type="term" value="P:L-histidine biosynthetic process"/>
    <property type="evidence" value="ECO:0007669"/>
    <property type="project" value="UniProtKB-KW"/>
</dbReference>
<dbReference type="GO" id="GO:0009086">
    <property type="term" value="P:methionine biosynthetic process"/>
    <property type="evidence" value="ECO:0007669"/>
    <property type="project" value="UniProtKB-KW"/>
</dbReference>
<dbReference type="GO" id="GO:0006164">
    <property type="term" value="P:purine nucleotide biosynthetic process"/>
    <property type="evidence" value="ECO:0007669"/>
    <property type="project" value="UniProtKB-KW"/>
</dbReference>
<dbReference type="GO" id="GO:0035999">
    <property type="term" value="P:tetrahydrofolate interconversion"/>
    <property type="evidence" value="ECO:0007669"/>
    <property type="project" value="UniProtKB-UniRule"/>
</dbReference>
<dbReference type="CDD" id="cd01080">
    <property type="entry name" value="NAD_bind_m-THF_DH_Cyclohyd"/>
    <property type="match status" value="1"/>
</dbReference>
<dbReference type="FunFam" id="3.40.50.720:FF:000094">
    <property type="entry name" value="Bifunctional protein FolD"/>
    <property type="match status" value="1"/>
</dbReference>
<dbReference type="FunFam" id="3.40.50.10860:FF:000005">
    <property type="entry name" value="C-1-tetrahydrofolate synthase, cytoplasmic, putative"/>
    <property type="match status" value="1"/>
</dbReference>
<dbReference type="Gene3D" id="3.40.50.10860">
    <property type="entry name" value="Leucine Dehydrogenase, chain A, domain 1"/>
    <property type="match status" value="1"/>
</dbReference>
<dbReference type="Gene3D" id="3.40.50.720">
    <property type="entry name" value="NAD(P)-binding Rossmann-like Domain"/>
    <property type="match status" value="1"/>
</dbReference>
<dbReference type="HAMAP" id="MF_01576">
    <property type="entry name" value="THF_DHG_CYH"/>
    <property type="match status" value="1"/>
</dbReference>
<dbReference type="InterPro" id="IPR046346">
    <property type="entry name" value="Aminoacid_DH-like_N_sf"/>
</dbReference>
<dbReference type="InterPro" id="IPR036291">
    <property type="entry name" value="NAD(P)-bd_dom_sf"/>
</dbReference>
<dbReference type="InterPro" id="IPR000672">
    <property type="entry name" value="THF_DH/CycHdrlase"/>
</dbReference>
<dbReference type="InterPro" id="IPR020630">
    <property type="entry name" value="THF_DH/CycHdrlase_cat_dom"/>
</dbReference>
<dbReference type="InterPro" id="IPR020631">
    <property type="entry name" value="THF_DH/CycHdrlase_NAD-bd_dom"/>
</dbReference>
<dbReference type="PANTHER" id="PTHR48099:SF5">
    <property type="entry name" value="C-1-TETRAHYDROFOLATE SYNTHASE, CYTOPLASMIC"/>
    <property type="match status" value="1"/>
</dbReference>
<dbReference type="PANTHER" id="PTHR48099">
    <property type="entry name" value="C-1-TETRAHYDROFOLATE SYNTHASE, CYTOPLASMIC-RELATED"/>
    <property type="match status" value="1"/>
</dbReference>
<dbReference type="Pfam" id="PF00763">
    <property type="entry name" value="THF_DHG_CYH"/>
    <property type="match status" value="1"/>
</dbReference>
<dbReference type="Pfam" id="PF02882">
    <property type="entry name" value="THF_DHG_CYH_C"/>
    <property type="match status" value="1"/>
</dbReference>
<dbReference type="PRINTS" id="PR00085">
    <property type="entry name" value="THFDHDRGNASE"/>
</dbReference>
<dbReference type="SUPFAM" id="SSF53223">
    <property type="entry name" value="Aminoacid dehydrogenase-like, N-terminal domain"/>
    <property type="match status" value="1"/>
</dbReference>
<dbReference type="SUPFAM" id="SSF51735">
    <property type="entry name" value="NAD(P)-binding Rossmann-fold domains"/>
    <property type="match status" value="1"/>
</dbReference>
<name>FOLD_CLOBJ</name>
<gene>
    <name evidence="1" type="primary">folD</name>
    <name type="ordered locus">CLM_1323</name>
</gene>
<organism>
    <name type="scientific">Clostridium botulinum (strain Kyoto / Type A2)</name>
    <dbReference type="NCBI Taxonomy" id="536232"/>
    <lineage>
        <taxon>Bacteria</taxon>
        <taxon>Bacillati</taxon>
        <taxon>Bacillota</taxon>
        <taxon>Clostridia</taxon>
        <taxon>Eubacteriales</taxon>
        <taxon>Clostridiaceae</taxon>
        <taxon>Clostridium</taxon>
    </lineage>
</organism>
<reference key="1">
    <citation type="submission" date="2008-10" db="EMBL/GenBank/DDBJ databases">
        <title>Genome sequence of Clostridium botulinum A2 Kyoto.</title>
        <authorList>
            <person name="Shrivastava S."/>
            <person name="Brinkac L.M."/>
            <person name="Brown J.L."/>
            <person name="Bruce D."/>
            <person name="Detter C.C."/>
            <person name="Johnson E.A."/>
            <person name="Munk C.A."/>
            <person name="Smith L.A."/>
            <person name="Smith T.J."/>
            <person name="Sutton G."/>
            <person name="Brettin T.S."/>
        </authorList>
    </citation>
    <scope>NUCLEOTIDE SEQUENCE [LARGE SCALE GENOMIC DNA]</scope>
    <source>
        <strain>Kyoto / Type A2</strain>
    </source>
</reference>
<feature type="chain" id="PRO_1000185604" description="Bifunctional protein FolD">
    <location>
        <begin position="1"/>
        <end position="282"/>
    </location>
</feature>
<feature type="binding site" evidence="1">
    <location>
        <begin position="165"/>
        <end position="167"/>
    </location>
    <ligand>
        <name>NADP(+)</name>
        <dbReference type="ChEBI" id="CHEBI:58349"/>
    </ligand>
</feature>
<feature type="binding site" evidence="1">
    <location>
        <position position="190"/>
    </location>
    <ligand>
        <name>NADP(+)</name>
        <dbReference type="ChEBI" id="CHEBI:58349"/>
    </ligand>
</feature>
<feature type="binding site" evidence="1">
    <location>
        <position position="231"/>
    </location>
    <ligand>
        <name>NADP(+)</name>
        <dbReference type="ChEBI" id="CHEBI:58349"/>
    </ligand>
</feature>
<sequence length="282" mass="31688">MTKILYGNEVALKIKEDLNLRIDKLKEKNIIPKLAILRMGNKPDDIAYERSIIKSCEKLNIETKVEELNEDILEEDFLKLMESLNNEKEIHGILVFRPYPKHLNENTINSSIALNKDVDCMHPLNLERIFEGDLNQFVPCTPEAVIEILKYYDIDLKGKNIVIINRSMVVGKPLSMMVLSNNATVTICHSKTIDLPSITKKADIVVTAIGKAKLIKEEYFNEDSIVMDVSINVDENGKLCGDVDFENVKEKVGAITPVPKGVGSVTTTLLLKHIVDAAERNS</sequence>
<protein>
    <recommendedName>
        <fullName evidence="1">Bifunctional protein FolD</fullName>
    </recommendedName>
    <domain>
        <recommendedName>
            <fullName evidence="1">Methylenetetrahydrofolate dehydrogenase</fullName>
            <ecNumber evidence="1">1.5.1.5</ecNumber>
        </recommendedName>
    </domain>
    <domain>
        <recommendedName>
            <fullName evidence="1">Methenyltetrahydrofolate cyclohydrolase</fullName>
            <ecNumber evidence="1">3.5.4.9</ecNumber>
        </recommendedName>
    </domain>
</protein>
<comment type="function">
    <text evidence="1">Catalyzes the oxidation of 5,10-methylenetetrahydrofolate to 5,10-methenyltetrahydrofolate and then the hydrolysis of 5,10-methenyltetrahydrofolate to 10-formyltetrahydrofolate.</text>
</comment>
<comment type="catalytic activity">
    <reaction evidence="1">
        <text>(6R)-5,10-methylene-5,6,7,8-tetrahydrofolate + NADP(+) = (6R)-5,10-methenyltetrahydrofolate + NADPH</text>
        <dbReference type="Rhea" id="RHEA:22812"/>
        <dbReference type="ChEBI" id="CHEBI:15636"/>
        <dbReference type="ChEBI" id="CHEBI:57455"/>
        <dbReference type="ChEBI" id="CHEBI:57783"/>
        <dbReference type="ChEBI" id="CHEBI:58349"/>
        <dbReference type="EC" id="1.5.1.5"/>
    </reaction>
</comment>
<comment type="catalytic activity">
    <reaction evidence="1">
        <text>(6R)-5,10-methenyltetrahydrofolate + H2O = (6R)-10-formyltetrahydrofolate + H(+)</text>
        <dbReference type="Rhea" id="RHEA:23700"/>
        <dbReference type="ChEBI" id="CHEBI:15377"/>
        <dbReference type="ChEBI" id="CHEBI:15378"/>
        <dbReference type="ChEBI" id="CHEBI:57455"/>
        <dbReference type="ChEBI" id="CHEBI:195366"/>
        <dbReference type="EC" id="3.5.4.9"/>
    </reaction>
</comment>
<comment type="pathway">
    <text evidence="1">One-carbon metabolism; tetrahydrofolate interconversion.</text>
</comment>
<comment type="subunit">
    <text evidence="1">Homodimer.</text>
</comment>
<comment type="similarity">
    <text evidence="1">Belongs to the tetrahydrofolate dehydrogenase/cyclohydrolase family.</text>
</comment>